<gene>
    <name evidence="8" type="primary">CSN6A</name>
    <name evidence="10" type="ordered locus">At5g56280</name>
    <name evidence="11" type="ORF">K24C1.10</name>
</gene>
<proteinExistence type="evidence at protein level"/>
<feature type="chain" id="PRO_0000194865" description="COP9 signalosome complex subunit 6a">
    <location>
        <begin position="1"/>
        <end position="317"/>
    </location>
</feature>
<feature type="domain" description="MPN" evidence="1">
    <location>
        <begin position="30"/>
        <end position="164"/>
    </location>
</feature>
<feature type="sequence conflict" description="In Ref. 2; AAL58106." evidence="9" ref="2">
    <original>K</original>
    <variation>E</variation>
    <location>
        <position position="95"/>
    </location>
</feature>
<feature type="sequence conflict" description="In Ref. 5; AAO42068." evidence="9" ref="5">
    <original>R</original>
    <variation>G</variation>
    <location>
        <position position="225"/>
    </location>
</feature>
<sequence length="317" mass="35659">MAPSSSSGLTFKLHPLVIVNISDHYTRVKTQLNPPASICASGHGSNNGEAMFQQNPRVYGCVIGVQRGRTVEIFNSFELLYDPSTQTLDRSFLEKKQELYKKVFPDFYILGWYSTGSDAEESDMHIHKALMDINESPVYVLLNPAINHTQKDLPVTIYESELHVIDGIPQLIFAHTSYTIETVEAERISVDHVAHLKPSDGGSAATQLAAHLTGIHSAIKMLNSRIRVLYQNLAAMQKGDKSCDNSVLRQVSSLLRRLPAMESERFQDNFLMEYNDKLLITYLAMITNCSSNMNEMVDKFNTAYDRNTRRGGRTAFM</sequence>
<accession>Q8W206</accession>
<accession>Q84WB5</accession>
<accession>Q941I1</accession>
<accession>Q9FG76</accession>
<reference key="1">
    <citation type="journal article" date="2001" name="Plant Cell">
        <title>Molecular characterization of subunit 6 of the COP9 signalosome and its role in multifaceted developmental processes in Arabidopsis.</title>
        <authorList>
            <person name="Peng Z."/>
            <person name="Serino G."/>
            <person name="Deng X.-W."/>
        </authorList>
    </citation>
    <scope>NUCLEOTIDE SEQUENCE [MRNA]</scope>
    <scope>FUNCTION</scope>
</reference>
<reference key="2">
    <citation type="journal article" date="2001" name="EMBO J.">
        <title>Subunit interaction maps for the regulatory particle of the 26S proteasome and the COP9 signalosome.</title>
        <authorList>
            <person name="Fu H."/>
            <person name="Reis N."/>
            <person name="Lee Y."/>
            <person name="Glickman M.H."/>
            <person name="Vierstra R."/>
        </authorList>
    </citation>
    <scope>NUCLEOTIDE SEQUENCE [MRNA]</scope>
    <source>
        <strain>cv. Columbia</strain>
    </source>
</reference>
<reference key="3">
    <citation type="submission" date="1999-04" db="EMBL/GenBank/DDBJ databases">
        <title>Structural analysis of Arabidopsis thaliana chromosome 5. XI.</title>
        <authorList>
            <person name="Kaneko T."/>
            <person name="Katoh T."/>
            <person name="Asamizu E."/>
            <person name="Sato S."/>
            <person name="Nakamura Y."/>
            <person name="Kotani H."/>
            <person name="Tabata S."/>
        </authorList>
    </citation>
    <scope>NUCLEOTIDE SEQUENCE [LARGE SCALE GENOMIC DNA]</scope>
    <source>
        <strain>cv. Columbia</strain>
    </source>
</reference>
<reference key="4">
    <citation type="journal article" date="2017" name="Plant J.">
        <title>Araport11: a complete reannotation of the Arabidopsis thaliana reference genome.</title>
        <authorList>
            <person name="Cheng C.Y."/>
            <person name="Krishnakumar V."/>
            <person name="Chan A.P."/>
            <person name="Thibaud-Nissen F."/>
            <person name="Schobel S."/>
            <person name="Town C.D."/>
        </authorList>
    </citation>
    <scope>GENOME REANNOTATION</scope>
    <source>
        <strain>cv. Columbia</strain>
    </source>
</reference>
<reference key="5">
    <citation type="journal article" date="2003" name="Science">
        <title>Empirical analysis of transcriptional activity in the Arabidopsis genome.</title>
        <authorList>
            <person name="Yamada K."/>
            <person name="Lim J."/>
            <person name="Dale J.M."/>
            <person name="Chen H."/>
            <person name="Shinn P."/>
            <person name="Palm C.J."/>
            <person name="Southwick A.M."/>
            <person name="Wu H.C."/>
            <person name="Kim C.J."/>
            <person name="Nguyen M."/>
            <person name="Pham P.K."/>
            <person name="Cheuk R.F."/>
            <person name="Karlin-Newmann G."/>
            <person name="Liu S.X."/>
            <person name="Lam B."/>
            <person name="Sakano H."/>
            <person name="Wu T."/>
            <person name="Yu G."/>
            <person name="Miranda M."/>
            <person name="Quach H.L."/>
            <person name="Tripp M."/>
            <person name="Chang C.H."/>
            <person name="Lee J.M."/>
            <person name="Toriumi M.J."/>
            <person name="Chan M.M."/>
            <person name="Tang C.C."/>
            <person name="Onodera C.S."/>
            <person name="Deng J.M."/>
            <person name="Akiyama K."/>
            <person name="Ansari Y."/>
            <person name="Arakawa T."/>
            <person name="Banh J."/>
            <person name="Banno F."/>
            <person name="Bowser L."/>
            <person name="Brooks S.Y."/>
            <person name="Carninci P."/>
            <person name="Chao Q."/>
            <person name="Choy N."/>
            <person name="Enju A."/>
            <person name="Goldsmith A.D."/>
            <person name="Gurjal M."/>
            <person name="Hansen N.F."/>
            <person name="Hayashizaki Y."/>
            <person name="Johnson-Hopson C."/>
            <person name="Hsuan V.W."/>
            <person name="Iida K."/>
            <person name="Karnes M."/>
            <person name="Khan S."/>
            <person name="Koesema E."/>
            <person name="Ishida J."/>
            <person name="Jiang P.X."/>
            <person name="Jones T."/>
            <person name="Kawai J."/>
            <person name="Kamiya A."/>
            <person name="Meyers C."/>
            <person name="Nakajima M."/>
            <person name="Narusaka M."/>
            <person name="Seki M."/>
            <person name="Sakurai T."/>
            <person name="Satou M."/>
            <person name="Tamse R."/>
            <person name="Vaysberg M."/>
            <person name="Wallender E.K."/>
            <person name="Wong C."/>
            <person name="Yamamura Y."/>
            <person name="Yuan S."/>
            <person name="Shinozaki K."/>
            <person name="Davis R.W."/>
            <person name="Theologis A."/>
            <person name="Ecker J.R."/>
        </authorList>
    </citation>
    <scope>NUCLEOTIDE SEQUENCE [LARGE SCALE MRNA] OF 95-317</scope>
    <source>
        <strain>cv. Columbia</strain>
    </source>
</reference>
<reference key="6">
    <citation type="journal article" date="2001" name="Science">
        <title>Interactions of the COP9 signalosome with the E3 ubiquitin ligase SCF(TIR1) in mediating auxin response.</title>
        <authorList>
            <person name="Schwechheimer C."/>
            <person name="Serino G."/>
            <person name="Callis J."/>
            <person name="Crosby W.L."/>
            <person name="Lyapina S."/>
            <person name="Deshaies R.J."/>
            <person name="Gray W.M."/>
            <person name="Estelle M."/>
            <person name="Deng X.-W."/>
        </authorList>
    </citation>
    <scope>FUNCTION</scope>
</reference>
<reference key="7">
    <citation type="journal article" date="2003" name="Plant Cell">
        <title>Characterization of the last subunit of the Arabidopsis COP9 signalosome: implications for the overall structure and origin of the complex.</title>
        <authorList>
            <person name="Serino G."/>
            <person name="Su H."/>
            <person name="Peng Z."/>
            <person name="Tsuge T."/>
            <person name="Wei N."/>
            <person name="Gu H."/>
            <person name="Deng X.-W."/>
        </authorList>
    </citation>
    <scope>INTERACTION WITH CSN4; CSN5 AND CSN7</scope>
</reference>
<reference key="8">
    <citation type="journal article" date="2007" name="Plant Cell">
        <title>Role of the MPN subunits in COP9 signalosome assembly and activity, and their regulatory interaction with Arabidopsis Cullin3-based E3 ligases.</title>
        <authorList>
            <person name="Gusmaroli G."/>
            <person name="Figueroa P."/>
            <person name="Serino G."/>
            <person name="Deng X.W."/>
        </authorList>
    </citation>
    <scope>FUNCTION</scope>
    <scope>DISRUPTION PHENOTYPE</scope>
</reference>
<reference key="9">
    <citation type="journal article" date="2008" name="Plant Cell">
        <title>The Arabidopsis COP9 signalosome subunit 7 is a model PCI domain protein with subdomains involved in COP9 signalosome assembly.</title>
        <authorList>
            <person name="Dessau M."/>
            <person name="Halimi Y."/>
            <person name="Erez T."/>
            <person name="Chomsky-Hecht O."/>
            <person name="Chamovitz D.A."/>
            <person name="Hirsch J.A."/>
        </authorList>
    </citation>
    <scope>INTERACTION WITH CSN7</scope>
</reference>
<reference key="10">
    <citation type="journal article" date="2008" name="Plant Signal. Behav.">
        <title>Arabidopsis eIF3e interacts with subunits of the ribosome, Cop9 signalosome and proteasome.</title>
        <authorList>
            <person name="Paz-Aviram T."/>
            <person name="Yahalom A."/>
            <person name="Chamovitz D.A."/>
        </authorList>
    </citation>
    <scope>INTERACTION WITH TIF3E1</scope>
</reference>
<organism>
    <name type="scientific">Arabidopsis thaliana</name>
    <name type="common">Mouse-ear cress</name>
    <dbReference type="NCBI Taxonomy" id="3702"/>
    <lineage>
        <taxon>Eukaryota</taxon>
        <taxon>Viridiplantae</taxon>
        <taxon>Streptophyta</taxon>
        <taxon>Embryophyta</taxon>
        <taxon>Tracheophyta</taxon>
        <taxon>Spermatophyta</taxon>
        <taxon>Magnoliopsida</taxon>
        <taxon>eudicotyledons</taxon>
        <taxon>Gunneridae</taxon>
        <taxon>Pentapetalae</taxon>
        <taxon>rosids</taxon>
        <taxon>malvids</taxon>
        <taxon>Brassicales</taxon>
        <taxon>Brassicaceae</taxon>
        <taxon>Camelineae</taxon>
        <taxon>Arabidopsis</taxon>
    </lineage>
</organism>
<evidence type="ECO:0000255" key="1">
    <source>
        <dbReference type="PROSITE-ProRule" id="PRU01182"/>
    </source>
</evidence>
<evidence type="ECO:0000269" key="2">
    <source>
    </source>
</evidence>
<evidence type="ECO:0000269" key="3">
    <source>
    </source>
</evidence>
<evidence type="ECO:0000269" key="4">
    <source>
    </source>
</evidence>
<evidence type="ECO:0000269" key="5">
    <source>
    </source>
</evidence>
<evidence type="ECO:0000269" key="6">
    <source>
    </source>
</evidence>
<evidence type="ECO:0000269" key="7">
    <source>
    </source>
</evidence>
<evidence type="ECO:0000303" key="8">
    <source>
    </source>
</evidence>
<evidence type="ECO:0000305" key="9"/>
<evidence type="ECO:0000312" key="10">
    <source>
        <dbReference type="Araport" id="AT5G56280"/>
    </source>
</evidence>
<evidence type="ECO:0000312" key="11">
    <source>
        <dbReference type="EMBL" id="BAB08872.1"/>
    </source>
</evidence>
<comment type="function">
    <text evidence="2 3 5">Component of the COP9 signalosome complex (CSN), a complex involved in various cellular and developmental processes such as photomorphogenesis and auxin and jasmonate responses. The CSN complex is an essential regulator of the ubiquitin (Ubl) conjugation pathway by mediating the deneddylation of the cullin subunits of SCF-type E3 ligase complexes, leading to decrease the Ubl ligase activity of SCF. It is involved in repression of photomorphogenesis in darkness by regulating the activity of COP1-containing Ubl ligase complexes. The complex is also required for degradation of PSIAA6 by regulating the activity of the Ubl ligase SCF-TIR complex. Essential for the structural integrity of the CSN holocomplex (PubMed:17307927).</text>
</comment>
<comment type="subunit">
    <text evidence="4 6 7">Component of the CSN complex, probably composed of CSN1, CSN2, CSN3, CSN4, CSN5 (CSN5A or CSN5B), CSN6 (CSN6A or CSN6B), CSN7 and CSN8. Interacts with itself. In the complex, it probably interacts directly with CSN4 and CSN5A or CSN5B. Interacts with CSN7 (via C-terminal tail). Binds to the translation initiation factors TIF3E1 (PubMed:19704582).</text>
</comment>
<comment type="interaction">
    <interactant intactId="EBI-531094">
        <id>Q8W206</id>
    </interactant>
    <interactant intactId="EBI-531055">
        <id>Q8W575</id>
        <label>CSN3</label>
    </interactant>
    <organismsDiffer>false</organismsDiffer>
    <experiments>3</experiments>
</comment>
<comment type="interaction">
    <interactant intactId="EBI-531094">
        <id>Q8W206</id>
    </interactant>
    <interactant intactId="EBI-531132">
        <id>Q8LAZ7</id>
        <label>CSN5A</label>
    </interactant>
    <organismsDiffer>false</organismsDiffer>
    <experiments>3</experiments>
</comment>
<comment type="subcellular location">
    <subcellularLocation>
        <location evidence="9">Cytoplasm</location>
    </subcellularLocation>
    <subcellularLocation>
        <location evidence="9">Nucleus</location>
    </subcellularLocation>
</comment>
<comment type="disruption phenotype">
    <text evidence="5">No visible phenotype when grown under normal conditions, due to the redundancy with CSN6A. Csn6a and csn6b double mutants are lethal at the seedling stage.</text>
</comment>
<comment type="miscellaneous">
    <text>Although strongly related to metalloprotease proteins, it lacks the JAMM motif that probably constitutes the catalytic center. Its function as protease is therefore unsure.</text>
</comment>
<comment type="similarity">
    <text evidence="9">Belongs to the peptidase M67A family. CSN6 subfamily.</text>
</comment>
<comment type="sequence caution" evidence="9">
    <conflict type="erroneous gene model prediction">
        <sequence resource="EMBL-CDS" id="BAB08872"/>
    </conflict>
</comment>
<protein>
    <recommendedName>
        <fullName evidence="8">COP9 signalosome complex subunit 6a</fullName>
        <shortName evidence="8">AtCSN6a</shortName>
        <shortName evidence="8">Signalosome subunit 6a</shortName>
    </recommendedName>
</protein>
<name>CSN6A_ARATH</name>
<dbReference type="EMBL" id="AY048692">
    <property type="protein sequence ID" value="AAL07275.1"/>
    <property type="molecule type" value="mRNA"/>
</dbReference>
<dbReference type="EMBL" id="AF395063">
    <property type="protein sequence ID" value="AAL58106.1"/>
    <property type="molecule type" value="mRNA"/>
</dbReference>
<dbReference type="EMBL" id="AB026656">
    <property type="protein sequence ID" value="BAB08872.1"/>
    <property type="status" value="ALT_SEQ"/>
    <property type="molecule type" value="Genomic_DNA"/>
</dbReference>
<dbReference type="EMBL" id="CP002688">
    <property type="protein sequence ID" value="AED96744.1"/>
    <property type="molecule type" value="Genomic_DNA"/>
</dbReference>
<dbReference type="EMBL" id="BT004034">
    <property type="protein sequence ID" value="AAO42068.1"/>
    <property type="molecule type" value="mRNA"/>
</dbReference>
<dbReference type="RefSeq" id="NP_568839.1">
    <property type="nucleotide sequence ID" value="NM_125011.4"/>
</dbReference>
<dbReference type="SMR" id="Q8W206"/>
<dbReference type="BioGRID" id="20971">
    <property type="interactions" value="15"/>
</dbReference>
<dbReference type="FunCoup" id="Q8W206">
    <property type="interactions" value="4008"/>
</dbReference>
<dbReference type="IntAct" id="Q8W206">
    <property type="interactions" value="7"/>
</dbReference>
<dbReference type="STRING" id="3702.Q8W206"/>
<dbReference type="PaxDb" id="3702-AT5G56280.1"/>
<dbReference type="ProteomicsDB" id="222622"/>
<dbReference type="EnsemblPlants" id="AT5G56280.1">
    <property type="protein sequence ID" value="AT5G56280.1"/>
    <property type="gene ID" value="AT5G56280"/>
</dbReference>
<dbReference type="GeneID" id="835727"/>
<dbReference type="Gramene" id="AT5G56280.1">
    <property type="protein sequence ID" value="AT5G56280.1"/>
    <property type="gene ID" value="AT5G56280"/>
</dbReference>
<dbReference type="KEGG" id="ath:AT5G56280"/>
<dbReference type="Araport" id="AT5G56280"/>
<dbReference type="TAIR" id="AT5G56280">
    <property type="gene designation" value="CSN6A"/>
</dbReference>
<dbReference type="eggNOG" id="KOG3050">
    <property type="taxonomic scope" value="Eukaryota"/>
</dbReference>
<dbReference type="HOGENOM" id="CLU_027018_1_2_1"/>
<dbReference type="InParanoid" id="Q8W206"/>
<dbReference type="OMA" id="SEHWMRE"/>
<dbReference type="OrthoDB" id="1378at2759"/>
<dbReference type="PhylomeDB" id="Q8W206"/>
<dbReference type="PRO" id="PR:Q8W206"/>
<dbReference type="Proteomes" id="UP000006548">
    <property type="component" value="Chromosome 5"/>
</dbReference>
<dbReference type="ExpressionAtlas" id="Q8W206">
    <property type="expression patterns" value="baseline and differential"/>
</dbReference>
<dbReference type="GO" id="GO:0008180">
    <property type="term" value="C:COP9 signalosome"/>
    <property type="evidence" value="ECO:0007669"/>
    <property type="project" value="UniProtKB-KW"/>
</dbReference>
<dbReference type="GO" id="GO:0005737">
    <property type="term" value="C:cytoplasm"/>
    <property type="evidence" value="ECO:0007669"/>
    <property type="project" value="UniProtKB-SubCell"/>
</dbReference>
<dbReference type="GO" id="GO:0005634">
    <property type="term" value="C:nucleus"/>
    <property type="evidence" value="ECO:0000304"/>
    <property type="project" value="TAIR"/>
</dbReference>
<dbReference type="GO" id="GO:0008237">
    <property type="term" value="F:metallopeptidase activity"/>
    <property type="evidence" value="ECO:0007669"/>
    <property type="project" value="InterPro"/>
</dbReference>
<dbReference type="GO" id="GO:0010387">
    <property type="term" value="P:COP9 signalosome assembly"/>
    <property type="evidence" value="ECO:0000315"/>
    <property type="project" value="TAIR"/>
</dbReference>
<dbReference type="GO" id="GO:0030163">
    <property type="term" value="P:protein catabolic process"/>
    <property type="evidence" value="ECO:0000304"/>
    <property type="project" value="TAIR"/>
</dbReference>
<dbReference type="GO" id="GO:0000338">
    <property type="term" value="P:protein deneddylation"/>
    <property type="evidence" value="ECO:0007669"/>
    <property type="project" value="InterPro"/>
</dbReference>
<dbReference type="GO" id="GO:0009585">
    <property type="term" value="P:red, far-red light phototransduction"/>
    <property type="evidence" value="ECO:0007669"/>
    <property type="project" value="UniProtKB-KW"/>
</dbReference>
<dbReference type="GO" id="GO:0006511">
    <property type="term" value="P:ubiquitin-dependent protein catabolic process"/>
    <property type="evidence" value="ECO:0000315"/>
    <property type="project" value="TAIR"/>
</dbReference>
<dbReference type="CDD" id="cd08063">
    <property type="entry name" value="MPN_CSN6"/>
    <property type="match status" value="1"/>
</dbReference>
<dbReference type="FunFam" id="3.40.140.10:FF:000037">
    <property type="entry name" value="COP9 signalosome subunit 6"/>
    <property type="match status" value="1"/>
</dbReference>
<dbReference type="Gene3D" id="3.40.140.10">
    <property type="entry name" value="Cytidine Deaminase, domain 2"/>
    <property type="match status" value="1"/>
</dbReference>
<dbReference type="InterPro" id="IPR024969">
    <property type="entry name" value="EIF3F/CSN6-like_C"/>
</dbReference>
<dbReference type="InterPro" id="IPR000555">
    <property type="entry name" value="JAMM/MPN+_dom"/>
</dbReference>
<dbReference type="InterPro" id="IPR037518">
    <property type="entry name" value="MPN"/>
</dbReference>
<dbReference type="InterPro" id="IPR033859">
    <property type="entry name" value="MPN_CSN6"/>
</dbReference>
<dbReference type="PANTHER" id="PTHR10540:SF8">
    <property type="entry name" value="COP9 SIGNALOSOME COMPLEX SUBUNIT 6"/>
    <property type="match status" value="1"/>
</dbReference>
<dbReference type="PANTHER" id="PTHR10540">
    <property type="entry name" value="EUKARYOTIC TRANSLATION INITIATION FACTOR 3 SUBUNIT F-RELATED"/>
    <property type="match status" value="1"/>
</dbReference>
<dbReference type="Pfam" id="PF01398">
    <property type="entry name" value="JAB"/>
    <property type="match status" value="1"/>
</dbReference>
<dbReference type="Pfam" id="PF13012">
    <property type="entry name" value="MitMem_reg"/>
    <property type="match status" value="1"/>
</dbReference>
<dbReference type="SMART" id="SM00232">
    <property type="entry name" value="JAB_MPN"/>
    <property type="match status" value="1"/>
</dbReference>
<dbReference type="PROSITE" id="PS50249">
    <property type="entry name" value="MPN"/>
    <property type="match status" value="1"/>
</dbReference>
<keyword id="KW-0963">Cytoplasm</keyword>
<keyword id="KW-0217">Developmental protein</keyword>
<keyword id="KW-0539">Nucleus</keyword>
<keyword id="KW-0607">Phytochrome signaling pathway</keyword>
<keyword id="KW-1185">Reference proteome</keyword>
<keyword id="KW-0736">Signalosome</keyword>